<comment type="function">
    <text evidence="1">Catalyzes the 2'-O-methylation of the ribose of cytidine 1402 (C1402) in 16S rRNA.</text>
</comment>
<comment type="catalytic activity">
    <reaction evidence="1">
        <text>cytidine(1402) in 16S rRNA + S-adenosyl-L-methionine = 2'-O-methylcytidine(1402) in 16S rRNA + S-adenosyl-L-homocysteine + H(+)</text>
        <dbReference type="Rhea" id="RHEA:42924"/>
        <dbReference type="Rhea" id="RHEA-COMP:10285"/>
        <dbReference type="Rhea" id="RHEA-COMP:10286"/>
        <dbReference type="ChEBI" id="CHEBI:15378"/>
        <dbReference type="ChEBI" id="CHEBI:57856"/>
        <dbReference type="ChEBI" id="CHEBI:59789"/>
        <dbReference type="ChEBI" id="CHEBI:74495"/>
        <dbReference type="ChEBI" id="CHEBI:82748"/>
        <dbReference type="EC" id="2.1.1.198"/>
    </reaction>
</comment>
<comment type="subcellular location">
    <subcellularLocation>
        <location evidence="1">Cytoplasm</location>
    </subcellularLocation>
</comment>
<comment type="similarity">
    <text evidence="1">Belongs to the methyltransferase superfamily. RsmI family.</text>
</comment>
<dbReference type="EC" id="2.1.1.198" evidence="1"/>
<dbReference type="EMBL" id="AE004091">
    <property type="protein sequence ID" value="AAG07810.1"/>
    <property type="molecule type" value="Genomic_DNA"/>
</dbReference>
<dbReference type="PIR" id="F83091">
    <property type="entry name" value="F83091"/>
</dbReference>
<dbReference type="RefSeq" id="NP_253112.1">
    <property type="nucleotide sequence ID" value="NC_002516.2"/>
</dbReference>
<dbReference type="RefSeq" id="WP_003120901.1">
    <property type="nucleotide sequence ID" value="NZ_QZGE01000004.1"/>
</dbReference>
<dbReference type="SMR" id="Q9HVZ3"/>
<dbReference type="FunCoup" id="Q9HVZ3">
    <property type="interactions" value="399"/>
</dbReference>
<dbReference type="STRING" id="208964.PA4422"/>
<dbReference type="PaxDb" id="208964-PA4422"/>
<dbReference type="GeneID" id="881235"/>
<dbReference type="KEGG" id="pae:PA4422"/>
<dbReference type="PATRIC" id="fig|208964.12.peg.4631"/>
<dbReference type="PseudoCAP" id="PA4422"/>
<dbReference type="HOGENOM" id="CLU_044779_4_0_6"/>
<dbReference type="InParanoid" id="Q9HVZ3"/>
<dbReference type="OrthoDB" id="9809084at2"/>
<dbReference type="PhylomeDB" id="Q9HVZ3"/>
<dbReference type="BioCyc" id="PAER208964:G1FZ6-4510-MONOMER"/>
<dbReference type="Proteomes" id="UP000002438">
    <property type="component" value="Chromosome"/>
</dbReference>
<dbReference type="GO" id="GO:0005737">
    <property type="term" value="C:cytoplasm"/>
    <property type="evidence" value="ECO:0007669"/>
    <property type="project" value="UniProtKB-SubCell"/>
</dbReference>
<dbReference type="GO" id="GO:0070677">
    <property type="term" value="F:rRNA (cytosine-2'-O-)-methyltransferase activity"/>
    <property type="evidence" value="ECO:0007669"/>
    <property type="project" value="UniProtKB-UniRule"/>
</dbReference>
<dbReference type="CDD" id="cd11648">
    <property type="entry name" value="RsmI"/>
    <property type="match status" value="1"/>
</dbReference>
<dbReference type="FunFam" id="3.30.950.10:FF:000002">
    <property type="entry name" value="Ribosomal RNA small subunit methyltransferase I"/>
    <property type="match status" value="1"/>
</dbReference>
<dbReference type="FunFam" id="3.40.1010.10:FF:000002">
    <property type="entry name" value="Ribosomal RNA small subunit methyltransferase I"/>
    <property type="match status" value="1"/>
</dbReference>
<dbReference type="Gene3D" id="3.40.1010.10">
    <property type="entry name" value="Cobalt-precorrin-4 Transmethylase, Domain 1"/>
    <property type="match status" value="1"/>
</dbReference>
<dbReference type="Gene3D" id="3.30.950.10">
    <property type="entry name" value="Methyltransferase, Cobalt-precorrin-4 Transmethylase, Domain 2"/>
    <property type="match status" value="1"/>
</dbReference>
<dbReference type="HAMAP" id="MF_01877">
    <property type="entry name" value="16SrRNA_methyltr_I"/>
    <property type="match status" value="1"/>
</dbReference>
<dbReference type="InterPro" id="IPR000878">
    <property type="entry name" value="4pyrrol_Mease"/>
</dbReference>
<dbReference type="InterPro" id="IPR035996">
    <property type="entry name" value="4pyrrol_Methylase_sf"/>
</dbReference>
<dbReference type="InterPro" id="IPR014777">
    <property type="entry name" value="4pyrrole_Mease_sub1"/>
</dbReference>
<dbReference type="InterPro" id="IPR014776">
    <property type="entry name" value="4pyrrole_Mease_sub2"/>
</dbReference>
<dbReference type="InterPro" id="IPR008189">
    <property type="entry name" value="rRNA_ssu_MeTfrase_I"/>
</dbReference>
<dbReference type="InterPro" id="IPR053910">
    <property type="entry name" value="RsmI_HTH"/>
</dbReference>
<dbReference type="InterPro" id="IPR018063">
    <property type="entry name" value="SAM_MeTrfase_RsmI_CS"/>
</dbReference>
<dbReference type="NCBIfam" id="TIGR00096">
    <property type="entry name" value="16S rRNA (cytidine(1402)-2'-O)-methyltransferase"/>
    <property type="match status" value="1"/>
</dbReference>
<dbReference type="PANTHER" id="PTHR46111">
    <property type="entry name" value="RIBOSOMAL RNA SMALL SUBUNIT METHYLTRANSFERASE I"/>
    <property type="match status" value="1"/>
</dbReference>
<dbReference type="PANTHER" id="PTHR46111:SF1">
    <property type="entry name" value="RIBOSOMAL RNA SMALL SUBUNIT METHYLTRANSFERASE I"/>
    <property type="match status" value="1"/>
</dbReference>
<dbReference type="Pfam" id="PF23016">
    <property type="entry name" value="RsmI_C"/>
    <property type="match status" value="1"/>
</dbReference>
<dbReference type="Pfam" id="PF00590">
    <property type="entry name" value="TP_methylase"/>
    <property type="match status" value="1"/>
</dbReference>
<dbReference type="PIRSF" id="PIRSF005917">
    <property type="entry name" value="MTase_YraL"/>
    <property type="match status" value="1"/>
</dbReference>
<dbReference type="SUPFAM" id="SSF53790">
    <property type="entry name" value="Tetrapyrrole methylase"/>
    <property type="match status" value="1"/>
</dbReference>
<dbReference type="PROSITE" id="PS01296">
    <property type="entry name" value="RSMI"/>
    <property type="match status" value="1"/>
</dbReference>
<keyword id="KW-0963">Cytoplasm</keyword>
<keyword id="KW-0489">Methyltransferase</keyword>
<keyword id="KW-1185">Reference proteome</keyword>
<keyword id="KW-0698">rRNA processing</keyword>
<keyword id="KW-0949">S-adenosyl-L-methionine</keyword>
<keyword id="KW-0808">Transferase</keyword>
<evidence type="ECO:0000255" key="1">
    <source>
        <dbReference type="HAMAP-Rule" id="MF_01877"/>
    </source>
</evidence>
<proteinExistence type="inferred from homology"/>
<gene>
    <name evidence="1" type="primary">rsmI</name>
    <name type="ordered locus">PA4422</name>
</gene>
<organism>
    <name type="scientific">Pseudomonas aeruginosa (strain ATCC 15692 / DSM 22644 / CIP 104116 / JCM 14847 / LMG 12228 / 1C / PRS 101 / PAO1)</name>
    <dbReference type="NCBI Taxonomy" id="208964"/>
    <lineage>
        <taxon>Bacteria</taxon>
        <taxon>Pseudomonadati</taxon>
        <taxon>Pseudomonadota</taxon>
        <taxon>Gammaproteobacteria</taxon>
        <taxon>Pseudomonadales</taxon>
        <taxon>Pseudomonadaceae</taxon>
        <taxon>Pseudomonas</taxon>
    </lineage>
</organism>
<accession>Q9HVZ3</accession>
<protein>
    <recommendedName>
        <fullName evidence="1">Ribosomal RNA small subunit methyltransferase I</fullName>
        <ecNumber evidence="1">2.1.1.198</ecNumber>
    </recommendedName>
    <alternativeName>
        <fullName evidence="1">16S rRNA 2'-O-ribose C1402 methyltransferase</fullName>
    </alternativeName>
    <alternativeName>
        <fullName evidence="1">rRNA (cytidine-2'-O-)-methyltransferase RsmI</fullName>
    </alternativeName>
</protein>
<sequence length="282" mass="30617">MSAGTLFVVATPIGNLDDISPRALRVLREVALVAAEDTRHSIRLFQHFGIETPLAACHEHNEREEGGRFISRLQGGEDVALISDAGTPLISDPGFHLVRQAQALGIRVVPVPGSCALIAALSAAGLPSDRFIFEGFLPAKAAGRRSRLQAVQEEPRTLIFYEAPHRLLESLADMRDVFGGERRAVLARELSKTFETIRSLPLAELHDWVASDSNQQRGECVVLVAGWQAPEGEESIGAEALRVLDLLLAELPLKKAAALAAEITGVRKNLLYQQALQRQGKS</sequence>
<feature type="chain" id="PRO_0000211951" description="Ribosomal RNA small subunit methyltransferase I">
    <location>
        <begin position="1"/>
        <end position="282"/>
    </location>
</feature>
<name>RSMI_PSEAE</name>
<reference key="1">
    <citation type="journal article" date="2000" name="Nature">
        <title>Complete genome sequence of Pseudomonas aeruginosa PAO1, an opportunistic pathogen.</title>
        <authorList>
            <person name="Stover C.K."/>
            <person name="Pham X.-Q.T."/>
            <person name="Erwin A.L."/>
            <person name="Mizoguchi S.D."/>
            <person name="Warrener P."/>
            <person name="Hickey M.J."/>
            <person name="Brinkman F.S.L."/>
            <person name="Hufnagle W.O."/>
            <person name="Kowalik D.J."/>
            <person name="Lagrou M."/>
            <person name="Garber R.L."/>
            <person name="Goltry L."/>
            <person name="Tolentino E."/>
            <person name="Westbrock-Wadman S."/>
            <person name="Yuan Y."/>
            <person name="Brody L.L."/>
            <person name="Coulter S.N."/>
            <person name="Folger K.R."/>
            <person name="Kas A."/>
            <person name="Larbig K."/>
            <person name="Lim R.M."/>
            <person name="Smith K.A."/>
            <person name="Spencer D.H."/>
            <person name="Wong G.K.-S."/>
            <person name="Wu Z."/>
            <person name="Paulsen I.T."/>
            <person name="Reizer J."/>
            <person name="Saier M.H. Jr."/>
            <person name="Hancock R.E.W."/>
            <person name="Lory S."/>
            <person name="Olson M.V."/>
        </authorList>
    </citation>
    <scope>NUCLEOTIDE SEQUENCE [LARGE SCALE GENOMIC DNA]</scope>
    <source>
        <strain>ATCC 15692 / DSM 22644 / CIP 104116 / JCM 14847 / LMG 12228 / 1C / PRS 101 / PAO1</strain>
    </source>
</reference>